<evidence type="ECO:0000255" key="1">
    <source>
        <dbReference type="HAMAP-Rule" id="MF_00120"/>
    </source>
</evidence>
<organism>
    <name type="scientific">Streptococcus pyogenes serotype M28 (strain MGAS6180)</name>
    <dbReference type="NCBI Taxonomy" id="319701"/>
    <lineage>
        <taxon>Bacteria</taxon>
        <taxon>Bacillati</taxon>
        <taxon>Bacillota</taxon>
        <taxon>Bacilli</taxon>
        <taxon>Lactobacillales</taxon>
        <taxon>Streptococcaceae</taxon>
        <taxon>Streptococcus</taxon>
    </lineage>
</organism>
<reference key="1">
    <citation type="journal article" date="2005" name="J. Infect. Dis.">
        <title>Genome sequence of a serotype M28 strain of group A Streptococcus: potential new insights into puerperal sepsis and bacterial disease specificity.</title>
        <authorList>
            <person name="Green N.M."/>
            <person name="Zhang S."/>
            <person name="Porcella S.F."/>
            <person name="Nagiec M.J."/>
            <person name="Barbian K.D."/>
            <person name="Beres S.B."/>
            <person name="Lefebvre R.B."/>
            <person name="Musser J.M."/>
        </authorList>
    </citation>
    <scope>NUCLEOTIDE SEQUENCE [LARGE SCALE GENOMIC DNA]</scope>
    <source>
        <strain>MGAS6180</strain>
    </source>
</reference>
<protein>
    <recommendedName>
        <fullName evidence="1">Glutamyl-tRNA(Gln) amidotransferase subunit A</fullName>
        <shortName evidence="1">Glu-ADT subunit A</shortName>
        <ecNumber evidence="1">6.3.5.7</ecNumber>
    </recommendedName>
</protein>
<dbReference type="EC" id="6.3.5.7" evidence="1"/>
<dbReference type="EMBL" id="CP000056">
    <property type="protein sequence ID" value="AAX72606.1"/>
    <property type="molecule type" value="Genomic_DNA"/>
</dbReference>
<dbReference type="RefSeq" id="WP_003053823.1">
    <property type="nucleotide sequence ID" value="NC_007296.2"/>
</dbReference>
<dbReference type="SMR" id="Q48RQ4"/>
<dbReference type="KEGG" id="spb:M28_Spy1496"/>
<dbReference type="HOGENOM" id="CLU_009600_0_3_9"/>
<dbReference type="GO" id="GO:0030956">
    <property type="term" value="C:glutamyl-tRNA(Gln) amidotransferase complex"/>
    <property type="evidence" value="ECO:0007669"/>
    <property type="project" value="InterPro"/>
</dbReference>
<dbReference type="GO" id="GO:0005524">
    <property type="term" value="F:ATP binding"/>
    <property type="evidence" value="ECO:0007669"/>
    <property type="project" value="UniProtKB-KW"/>
</dbReference>
<dbReference type="GO" id="GO:0050567">
    <property type="term" value="F:glutaminyl-tRNA synthase (glutamine-hydrolyzing) activity"/>
    <property type="evidence" value="ECO:0007669"/>
    <property type="project" value="UniProtKB-UniRule"/>
</dbReference>
<dbReference type="GO" id="GO:0006412">
    <property type="term" value="P:translation"/>
    <property type="evidence" value="ECO:0007669"/>
    <property type="project" value="UniProtKB-UniRule"/>
</dbReference>
<dbReference type="Gene3D" id="3.90.1300.10">
    <property type="entry name" value="Amidase signature (AS) domain"/>
    <property type="match status" value="1"/>
</dbReference>
<dbReference type="HAMAP" id="MF_00120">
    <property type="entry name" value="GatA"/>
    <property type="match status" value="1"/>
</dbReference>
<dbReference type="InterPro" id="IPR000120">
    <property type="entry name" value="Amidase"/>
</dbReference>
<dbReference type="InterPro" id="IPR020556">
    <property type="entry name" value="Amidase_CS"/>
</dbReference>
<dbReference type="InterPro" id="IPR023631">
    <property type="entry name" value="Amidase_dom"/>
</dbReference>
<dbReference type="InterPro" id="IPR036928">
    <property type="entry name" value="AS_sf"/>
</dbReference>
<dbReference type="InterPro" id="IPR004412">
    <property type="entry name" value="GatA"/>
</dbReference>
<dbReference type="NCBIfam" id="TIGR00132">
    <property type="entry name" value="gatA"/>
    <property type="match status" value="1"/>
</dbReference>
<dbReference type="PANTHER" id="PTHR11895:SF151">
    <property type="entry name" value="GLUTAMYL-TRNA(GLN) AMIDOTRANSFERASE SUBUNIT A"/>
    <property type="match status" value="1"/>
</dbReference>
<dbReference type="PANTHER" id="PTHR11895">
    <property type="entry name" value="TRANSAMIDASE"/>
    <property type="match status" value="1"/>
</dbReference>
<dbReference type="Pfam" id="PF01425">
    <property type="entry name" value="Amidase"/>
    <property type="match status" value="1"/>
</dbReference>
<dbReference type="SUPFAM" id="SSF75304">
    <property type="entry name" value="Amidase signature (AS) enzymes"/>
    <property type="match status" value="1"/>
</dbReference>
<dbReference type="PROSITE" id="PS00571">
    <property type="entry name" value="AMIDASES"/>
    <property type="match status" value="1"/>
</dbReference>
<accession>Q48RQ4</accession>
<feature type="chain" id="PRO_0000241159" description="Glutamyl-tRNA(Gln) amidotransferase subunit A">
    <location>
        <begin position="1"/>
        <end position="488"/>
    </location>
</feature>
<feature type="active site" description="Charge relay system" evidence="1">
    <location>
        <position position="77"/>
    </location>
</feature>
<feature type="active site" description="Charge relay system" evidence="1">
    <location>
        <position position="152"/>
    </location>
</feature>
<feature type="active site" description="Acyl-ester intermediate" evidence="1">
    <location>
        <position position="176"/>
    </location>
</feature>
<comment type="function">
    <text evidence="1">Allows the formation of correctly charged Gln-tRNA(Gln) through the transamidation of misacylated Glu-tRNA(Gln) in organisms which lack glutaminyl-tRNA synthetase. The reaction takes place in the presence of glutamine and ATP through an activated gamma-phospho-Glu-tRNA(Gln).</text>
</comment>
<comment type="catalytic activity">
    <reaction evidence="1">
        <text>L-glutamyl-tRNA(Gln) + L-glutamine + ATP + H2O = L-glutaminyl-tRNA(Gln) + L-glutamate + ADP + phosphate + H(+)</text>
        <dbReference type="Rhea" id="RHEA:17521"/>
        <dbReference type="Rhea" id="RHEA-COMP:9681"/>
        <dbReference type="Rhea" id="RHEA-COMP:9684"/>
        <dbReference type="ChEBI" id="CHEBI:15377"/>
        <dbReference type="ChEBI" id="CHEBI:15378"/>
        <dbReference type="ChEBI" id="CHEBI:29985"/>
        <dbReference type="ChEBI" id="CHEBI:30616"/>
        <dbReference type="ChEBI" id="CHEBI:43474"/>
        <dbReference type="ChEBI" id="CHEBI:58359"/>
        <dbReference type="ChEBI" id="CHEBI:78520"/>
        <dbReference type="ChEBI" id="CHEBI:78521"/>
        <dbReference type="ChEBI" id="CHEBI:456216"/>
        <dbReference type="EC" id="6.3.5.7"/>
    </reaction>
</comment>
<comment type="subunit">
    <text evidence="1">Heterotrimer of A, B and C subunits.</text>
</comment>
<comment type="similarity">
    <text evidence="1">Belongs to the amidase family. GatA subfamily.</text>
</comment>
<name>GATA_STRPM</name>
<gene>
    <name evidence="1" type="primary">gatA</name>
    <name type="ordered locus">M28_Spy1496</name>
</gene>
<sequence length="488" mass="52205">MSFNHKTIEELHDLLVAKEISATELTQKTLEDIKSREEAVGSFITVSEEAALKQAAAIDAKGIDADNLMSGIPLAVKDNISTKGILTTAASKMLYNYEPIFDATSVANAYAKDMIVIGKTNMDEFAMGGSTETSYFKKTKNAWDHTKVPGGSSGGSATAVASGQVRLSLGSDTGGSIRQPAAFNGVVGLKPTYGTVSRYGLIAFGSSLDQIGPFAPTVKENAQLLNVIASSDVKDATSAPVRIADYTSKIGRDIKGMKIALPKEYLGEGIDPEIKETVLAAAKQFEALGATVEEVSLPHSKYGVAVYYIIASSEASSNLQRFDGIRYGFRADDAKNLDEIYVNTRSQGFGDEVKRRIMLGTFSLSSGYYDAYFKKAGQVRTLIIEDFDKVFADYDLILGPTTPTVAFGLDTLNHDPVAMYLADLLTIPVNLAGLPGISIPAGFVDGLPVGLQLIGPKYAEETIYQAAAAFEAVTDYHKQQPIIFGGDK</sequence>
<keyword id="KW-0067">ATP-binding</keyword>
<keyword id="KW-0436">Ligase</keyword>
<keyword id="KW-0547">Nucleotide-binding</keyword>
<keyword id="KW-0648">Protein biosynthesis</keyword>
<proteinExistence type="inferred from homology"/>